<sequence>MTKTKIIFMGTPQFAATVLKGLIDSNQYEILAVVTQPDRKVGRKQELRMTPVKELALTVNLPVLQPEKLSGSVEMTQIMTLLESGEVGIVTAAFGQFLPGKLLDVARFAVNTHASLLPKYRGGAPIHYAIMNGEKEAGVTIMEMIRKMDAGDMIAQNSTPILEEDNVGTMFEKLAFVGRDLLLETLPKYLEGQLKAQAQNEDEVTFSPNISPEEEKIDWNKSAREIFNKVRGMNPFPVAHTLWNGERFKIYESKVADEIVNNSDNPLQAGQIVEKTKKSLKVATGNGILELLTVQPAGKPKMDIVSFLNGLGQKMQVGDKLGD</sequence>
<reference key="1">
    <citation type="journal article" date="2006" name="Proc. Natl. Acad. Sci. U.S.A.">
        <title>Comparative genomics of the lactic acid bacteria.</title>
        <authorList>
            <person name="Makarova K.S."/>
            <person name="Slesarev A."/>
            <person name="Wolf Y.I."/>
            <person name="Sorokin A."/>
            <person name="Mirkin B."/>
            <person name="Koonin E.V."/>
            <person name="Pavlov A."/>
            <person name="Pavlova N."/>
            <person name="Karamychev V."/>
            <person name="Polouchine N."/>
            <person name="Shakhova V."/>
            <person name="Grigoriev I."/>
            <person name="Lou Y."/>
            <person name="Rohksar D."/>
            <person name="Lucas S."/>
            <person name="Huang K."/>
            <person name="Goodstein D.M."/>
            <person name="Hawkins T."/>
            <person name="Plengvidhya V."/>
            <person name="Welker D."/>
            <person name="Hughes J."/>
            <person name="Goh Y."/>
            <person name="Benson A."/>
            <person name="Baldwin K."/>
            <person name="Lee J.-H."/>
            <person name="Diaz-Muniz I."/>
            <person name="Dosti B."/>
            <person name="Smeianov V."/>
            <person name="Wechter W."/>
            <person name="Barabote R."/>
            <person name="Lorca G."/>
            <person name="Altermann E."/>
            <person name="Barrangou R."/>
            <person name="Ganesan B."/>
            <person name="Xie Y."/>
            <person name="Rawsthorne H."/>
            <person name="Tamir D."/>
            <person name="Parker C."/>
            <person name="Breidt F."/>
            <person name="Broadbent J.R."/>
            <person name="Hutkins R."/>
            <person name="O'Sullivan D."/>
            <person name="Steele J."/>
            <person name="Unlu G."/>
            <person name="Saier M.H. Jr."/>
            <person name="Klaenhammer T."/>
            <person name="Richardson P."/>
            <person name="Kozyavkin S."/>
            <person name="Weimer B.C."/>
            <person name="Mills D.A."/>
        </authorList>
    </citation>
    <scope>NUCLEOTIDE SEQUENCE [LARGE SCALE GENOMIC DNA]</scope>
    <source>
        <strain>SK11</strain>
    </source>
</reference>
<accession>Q02WP8</accession>
<name>FMT_LACLS</name>
<proteinExistence type="inferred from homology"/>
<protein>
    <recommendedName>
        <fullName evidence="1">Methionyl-tRNA formyltransferase</fullName>
        <ecNumber evidence="1">2.1.2.9</ecNumber>
    </recommendedName>
</protein>
<feature type="chain" id="PRO_1000020088" description="Methionyl-tRNA formyltransferase">
    <location>
        <begin position="1"/>
        <end position="323"/>
    </location>
</feature>
<feature type="binding site" evidence="1">
    <location>
        <begin position="115"/>
        <end position="118"/>
    </location>
    <ligand>
        <name>(6S)-5,6,7,8-tetrahydrofolate</name>
        <dbReference type="ChEBI" id="CHEBI:57453"/>
    </ligand>
</feature>
<comment type="function">
    <text evidence="1">Attaches a formyl group to the free amino group of methionyl-tRNA(fMet). The formyl group appears to play a dual role in the initiator identity of N-formylmethionyl-tRNA by promoting its recognition by IF2 and preventing the misappropriation of this tRNA by the elongation apparatus.</text>
</comment>
<comment type="catalytic activity">
    <reaction evidence="1">
        <text>L-methionyl-tRNA(fMet) + (6R)-10-formyltetrahydrofolate = N-formyl-L-methionyl-tRNA(fMet) + (6S)-5,6,7,8-tetrahydrofolate + H(+)</text>
        <dbReference type="Rhea" id="RHEA:24380"/>
        <dbReference type="Rhea" id="RHEA-COMP:9952"/>
        <dbReference type="Rhea" id="RHEA-COMP:9953"/>
        <dbReference type="ChEBI" id="CHEBI:15378"/>
        <dbReference type="ChEBI" id="CHEBI:57453"/>
        <dbReference type="ChEBI" id="CHEBI:78530"/>
        <dbReference type="ChEBI" id="CHEBI:78844"/>
        <dbReference type="ChEBI" id="CHEBI:195366"/>
        <dbReference type="EC" id="2.1.2.9"/>
    </reaction>
</comment>
<comment type="similarity">
    <text evidence="1">Belongs to the Fmt family.</text>
</comment>
<dbReference type="EC" id="2.1.2.9" evidence="1"/>
<dbReference type="EMBL" id="CP000425">
    <property type="protein sequence ID" value="ABJ73624.1"/>
    <property type="molecule type" value="Genomic_DNA"/>
</dbReference>
<dbReference type="RefSeq" id="WP_011676961.1">
    <property type="nucleotide sequence ID" value="NC_008527.1"/>
</dbReference>
<dbReference type="SMR" id="Q02WP8"/>
<dbReference type="KEGG" id="llc:LACR_2150"/>
<dbReference type="HOGENOM" id="CLU_033347_1_1_9"/>
<dbReference type="Proteomes" id="UP000000240">
    <property type="component" value="Chromosome"/>
</dbReference>
<dbReference type="GO" id="GO:0005829">
    <property type="term" value="C:cytosol"/>
    <property type="evidence" value="ECO:0007669"/>
    <property type="project" value="TreeGrafter"/>
</dbReference>
<dbReference type="GO" id="GO:0004479">
    <property type="term" value="F:methionyl-tRNA formyltransferase activity"/>
    <property type="evidence" value="ECO:0007669"/>
    <property type="project" value="UniProtKB-UniRule"/>
</dbReference>
<dbReference type="CDD" id="cd08646">
    <property type="entry name" value="FMT_core_Met-tRNA-FMT_N"/>
    <property type="match status" value="1"/>
</dbReference>
<dbReference type="CDD" id="cd08704">
    <property type="entry name" value="Met_tRNA_FMT_C"/>
    <property type="match status" value="1"/>
</dbReference>
<dbReference type="Gene3D" id="3.10.25.10">
    <property type="entry name" value="Formyl transferase, C-terminal domain"/>
    <property type="match status" value="1"/>
</dbReference>
<dbReference type="Gene3D" id="3.40.50.170">
    <property type="entry name" value="Formyl transferase, N-terminal domain"/>
    <property type="match status" value="1"/>
</dbReference>
<dbReference type="HAMAP" id="MF_00182">
    <property type="entry name" value="Formyl_trans"/>
    <property type="match status" value="1"/>
</dbReference>
<dbReference type="InterPro" id="IPR005794">
    <property type="entry name" value="Fmt"/>
</dbReference>
<dbReference type="InterPro" id="IPR005793">
    <property type="entry name" value="Formyl_trans_C"/>
</dbReference>
<dbReference type="InterPro" id="IPR037022">
    <property type="entry name" value="Formyl_trans_C_sf"/>
</dbReference>
<dbReference type="InterPro" id="IPR002376">
    <property type="entry name" value="Formyl_transf_N"/>
</dbReference>
<dbReference type="InterPro" id="IPR036477">
    <property type="entry name" value="Formyl_transf_N_sf"/>
</dbReference>
<dbReference type="InterPro" id="IPR011034">
    <property type="entry name" value="Formyl_transferase-like_C_sf"/>
</dbReference>
<dbReference type="InterPro" id="IPR044135">
    <property type="entry name" value="Met-tRNA-FMT_C"/>
</dbReference>
<dbReference type="InterPro" id="IPR041711">
    <property type="entry name" value="Met-tRNA-FMT_N"/>
</dbReference>
<dbReference type="NCBIfam" id="TIGR00460">
    <property type="entry name" value="fmt"/>
    <property type="match status" value="1"/>
</dbReference>
<dbReference type="PANTHER" id="PTHR11138">
    <property type="entry name" value="METHIONYL-TRNA FORMYLTRANSFERASE"/>
    <property type="match status" value="1"/>
</dbReference>
<dbReference type="PANTHER" id="PTHR11138:SF5">
    <property type="entry name" value="METHIONYL-TRNA FORMYLTRANSFERASE, MITOCHONDRIAL"/>
    <property type="match status" value="1"/>
</dbReference>
<dbReference type="Pfam" id="PF02911">
    <property type="entry name" value="Formyl_trans_C"/>
    <property type="match status" value="1"/>
</dbReference>
<dbReference type="Pfam" id="PF00551">
    <property type="entry name" value="Formyl_trans_N"/>
    <property type="match status" value="1"/>
</dbReference>
<dbReference type="SUPFAM" id="SSF50486">
    <property type="entry name" value="FMT C-terminal domain-like"/>
    <property type="match status" value="1"/>
</dbReference>
<dbReference type="SUPFAM" id="SSF53328">
    <property type="entry name" value="Formyltransferase"/>
    <property type="match status" value="1"/>
</dbReference>
<organism>
    <name type="scientific">Lactococcus lactis subsp. cremoris (strain SK11)</name>
    <dbReference type="NCBI Taxonomy" id="272622"/>
    <lineage>
        <taxon>Bacteria</taxon>
        <taxon>Bacillati</taxon>
        <taxon>Bacillota</taxon>
        <taxon>Bacilli</taxon>
        <taxon>Lactobacillales</taxon>
        <taxon>Streptococcaceae</taxon>
        <taxon>Lactococcus</taxon>
        <taxon>Lactococcus cremoris subsp. cremoris</taxon>
    </lineage>
</organism>
<evidence type="ECO:0000255" key="1">
    <source>
        <dbReference type="HAMAP-Rule" id="MF_00182"/>
    </source>
</evidence>
<keyword id="KW-0648">Protein biosynthesis</keyword>
<keyword id="KW-0808">Transferase</keyword>
<gene>
    <name evidence="1" type="primary">fmt</name>
    <name type="ordered locus">LACR_2150</name>
</gene>